<protein>
    <recommendedName>
        <fullName>UDP-glycosyltransferase 78D4</fullName>
        <ecNumber>2.4.1.-</ecNumber>
    </recommendedName>
</protein>
<name>U78D4_ARATH</name>
<feature type="chain" id="PRO_0000409106" description="UDP-glycosyltransferase 78D4">
    <location>
        <begin position="1"/>
        <end position="442"/>
    </location>
</feature>
<feature type="binding site" evidence="1">
    <location>
        <begin position="322"/>
        <end position="324"/>
    </location>
    <ligand>
        <name>UDP-alpha-D-glucose</name>
        <dbReference type="ChEBI" id="CHEBI:58885"/>
    </ligand>
</feature>
<feature type="binding site" evidence="1">
    <location>
        <begin position="339"/>
        <end position="347"/>
    </location>
    <ligand>
        <name>UDP-alpha-D-glucose</name>
        <dbReference type="ChEBI" id="CHEBI:58885"/>
    </ligand>
</feature>
<feature type="binding site" evidence="1">
    <location>
        <begin position="361"/>
        <end position="364"/>
    </location>
    <ligand>
        <name>UDP-alpha-D-glucose</name>
        <dbReference type="ChEBI" id="CHEBI:58885"/>
    </ligand>
</feature>
<evidence type="ECO:0000250" key="1"/>
<evidence type="ECO:0000305" key="2"/>
<dbReference type="EC" id="2.4.1.-"/>
<dbReference type="EMBL" id="AL391141">
    <property type="protein sequence ID" value="CAC01717.1"/>
    <property type="status" value="ALT_SEQ"/>
    <property type="molecule type" value="Genomic_DNA"/>
</dbReference>
<dbReference type="EMBL" id="CP002688">
    <property type="protein sequence ID" value="AED92376.1"/>
    <property type="molecule type" value="Genomic_DNA"/>
</dbReference>
<dbReference type="PIR" id="T51559">
    <property type="entry name" value="T51559"/>
</dbReference>
<dbReference type="RefSeq" id="NP_197206.2">
    <property type="nucleotide sequence ID" value="NM_121710.3"/>
</dbReference>
<dbReference type="SMR" id="Q9LFJ9"/>
<dbReference type="STRING" id="3702.Q9LFJ9"/>
<dbReference type="CAZy" id="GT1">
    <property type="family name" value="Glycosyltransferase Family 1"/>
</dbReference>
<dbReference type="PaxDb" id="3702-AT5G17040.1"/>
<dbReference type="EnsemblPlants" id="AT5G17040.1">
    <property type="protein sequence ID" value="AT5G17040.1"/>
    <property type="gene ID" value="AT5G17040"/>
</dbReference>
<dbReference type="GeneID" id="831567"/>
<dbReference type="Gramene" id="AT5G17040.1">
    <property type="protein sequence ID" value="AT5G17040.1"/>
    <property type="gene ID" value="AT5G17040"/>
</dbReference>
<dbReference type="KEGG" id="ath:AT5G17040"/>
<dbReference type="Araport" id="AT5G17040"/>
<dbReference type="TAIR" id="AT5G17040"/>
<dbReference type="eggNOG" id="KOG1192">
    <property type="taxonomic scope" value="Eukaryota"/>
</dbReference>
<dbReference type="HOGENOM" id="CLU_001724_0_2_1"/>
<dbReference type="InParanoid" id="Q9LFJ9"/>
<dbReference type="OMA" id="MHRVMSL"/>
<dbReference type="BioCyc" id="ARA:AT5G17040-MONOMER"/>
<dbReference type="PRO" id="PR:Q9LFJ9"/>
<dbReference type="Proteomes" id="UP000006548">
    <property type="component" value="Chromosome 5"/>
</dbReference>
<dbReference type="ExpressionAtlas" id="Q9LFJ9">
    <property type="expression patterns" value="baseline and differential"/>
</dbReference>
<dbReference type="GO" id="GO:0035251">
    <property type="term" value="F:UDP-glucosyltransferase activity"/>
    <property type="evidence" value="ECO:0007669"/>
    <property type="project" value="UniProtKB-ARBA"/>
</dbReference>
<dbReference type="CDD" id="cd03784">
    <property type="entry name" value="GT1_Gtf-like"/>
    <property type="match status" value="1"/>
</dbReference>
<dbReference type="FunFam" id="3.40.50.2000:FF:000091">
    <property type="entry name" value="Glycosyltransferase"/>
    <property type="match status" value="1"/>
</dbReference>
<dbReference type="FunFam" id="3.40.50.2000:FF:000129">
    <property type="entry name" value="Glycosyltransferase"/>
    <property type="match status" value="1"/>
</dbReference>
<dbReference type="Gene3D" id="3.40.50.2000">
    <property type="entry name" value="Glycogen Phosphorylase B"/>
    <property type="match status" value="2"/>
</dbReference>
<dbReference type="InterPro" id="IPR002213">
    <property type="entry name" value="UDP_glucos_trans"/>
</dbReference>
<dbReference type="InterPro" id="IPR035595">
    <property type="entry name" value="UDP_glycos_trans_CS"/>
</dbReference>
<dbReference type="PANTHER" id="PTHR11926">
    <property type="entry name" value="GLUCOSYL/GLUCURONOSYL TRANSFERASES"/>
    <property type="match status" value="1"/>
</dbReference>
<dbReference type="PANTHER" id="PTHR11926:SF1560">
    <property type="entry name" value="UDP-GLYCOSYLTRANSFERASE 74E1-RELATED"/>
    <property type="match status" value="1"/>
</dbReference>
<dbReference type="Pfam" id="PF00201">
    <property type="entry name" value="UDPGT"/>
    <property type="match status" value="1"/>
</dbReference>
<dbReference type="SUPFAM" id="SSF53756">
    <property type="entry name" value="UDP-Glycosyltransferase/glycogen phosphorylase"/>
    <property type="match status" value="1"/>
</dbReference>
<dbReference type="PROSITE" id="PS00375">
    <property type="entry name" value="UDPGT"/>
    <property type="match status" value="1"/>
</dbReference>
<keyword id="KW-0328">Glycosyltransferase</keyword>
<keyword id="KW-1185">Reference proteome</keyword>
<keyword id="KW-0808">Transferase</keyword>
<accession>Q9LFJ9</accession>
<comment type="similarity">
    <text evidence="2">Belongs to the UDP-glycosyltransferase family.</text>
</comment>
<comment type="sequence caution" evidence="2">
    <conflict type="erroneous gene model prediction">
        <sequence resource="EMBL-CDS" id="CAC01717"/>
    </conflict>
</comment>
<proteinExistence type="evidence at transcript level"/>
<gene>
    <name type="primary">UGT78D4</name>
    <name type="ordered locus">At5g17040</name>
    <name type="ORF">F2K13.190</name>
</gene>
<sequence>MANSHVAVLAFPFGSHGQAILAVTRRLATAAPSTVFSFLNTSQSNFSLLSSDLPPNIRVHDVSDGVPEGYVLSRNPQEAVELFLEAAPEIFRRELAVAETEVGRKVTCMLTDAFIWFAGDMAAEMKVSWVAFWTSGTRSLLISTQISSEKQSLSKETLGCISGMEKIRVKDTPEGVVFGNLDSVFSKMLHQMGLALPRATTVYMNSFEELDPTLTDNLRLKFKRYLSIGPLALLFSTSQRETPLHDPHGCLAWIKKRSTASVVYIAFGRVMTPPPGELVVVAQGLESSKVPFVWSLQEKNMVHLPKGFLDGTREQGMVVPWAPQVELLNHEAMGVFVSHGGWNSVLESVSAGVPMICRPIFGDHALNARSVEAVWEIGMTISSGVFTKDGFEESLDRVLVQDDGKKMKFNAKKLKELAQEAVSTEGSSFENFKGLLDEVMKV</sequence>
<organism>
    <name type="scientific">Arabidopsis thaliana</name>
    <name type="common">Mouse-ear cress</name>
    <dbReference type="NCBI Taxonomy" id="3702"/>
    <lineage>
        <taxon>Eukaryota</taxon>
        <taxon>Viridiplantae</taxon>
        <taxon>Streptophyta</taxon>
        <taxon>Embryophyta</taxon>
        <taxon>Tracheophyta</taxon>
        <taxon>Spermatophyta</taxon>
        <taxon>Magnoliopsida</taxon>
        <taxon>eudicotyledons</taxon>
        <taxon>Gunneridae</taxon>
        <taxon>Pentapetalae</taxon>
        <taxon>rosids</taxon>
        <taxon>malvids</taxon>
        <taxon>Brassicales</taxon>
        <taxon>Brassicaceae</taxon>
        <taxon>Camelineae</taxon>
        <taxon>Arabidopsis</taxon>
    </lineage>
</organism>
<reference key="1">
    <citation type="journal article" date="2000" name="Nature">
        <title>Sequence and analysis of chromosome 5 of the plant Arabidopsis thaliana.</title>
        <authorList>
            <person name="Tabata S."/>
            <person name="Kaneko T."/>
            <person name="Nakamura Y."/>
            <person name="Kotani H."/>
            <person name="Kato T."/>
            <person name="Asamizu E."/>
            <person name="Miyajima N."/>
            <person name="Sasamoto S."/>
            <person name="Kimura T."/>
            <person name="Hosouchi T."/>
            <person name="Kawashima K."/>
            <person name="Kohara M."/>
            <person name="Matsumoto M."/>
            <person name="Matsuno A."/>
            <person name="Muraki A."/>
            <person name="Nakayama S."/>
            <person name="Nakazaki N."/>
            <person name="Naruo K."/>
            <person name="Okumura S."/>
            <person name="Shinpo S."/>
            <person name="Takeuchi C."/>
            <person name="Wada T."/>
            <person name="Watanabe A."/>
            <person name="Yamada M."/>
            <person name="Yasuda M."/>
            <person name="Sato S."/>
            <person name="de la Bastide M."/>
            <person name="Huang E."/>
            <person name="Spiegel L."/>
            <person name="Gnoj L."/>
            <person name="O'Shaughnessy A."/>
            <person name="Preston R."/>
            <person name="Habermann K."/>
            <person name="Murray J."/>
            <person name="Johnson D."/>
            <person name="Rohlfing T."/>
            <person name="Nelson J."/>
            <person name="Stoneking T."/>
            <person name="Pepin K."/>
            <person name="Spieth J."/>
            <person name="Sekhon M."/>
            <person name="Armstrong J."/>
            <person name="Becker M."/>
            <person name="Belter E."/>
            <person name="Cordum H."/>
            <person name="Cordes M."/>
            <person name="Courtney L."/>
            <person name="Courtney W."/>
            <person name="Dante M."/>
            <person name="Du H."/>
            <person name="Edwards J."/>
            <person name="Fryman J."/>
            <person name="Haakensen B."/>
            <person name="Lamar E."/>
            <person name="Latreille P."/>
            <person name="Leonard S."/>
            <person name="Meyer R."/>
            <person name="Mulvaney E."/>
            <person name="Ozersky P."/>
            <person name="Riley A."/>
            <person name="Strowmatt C."/>
            <person name="Wagner-McPherson C."/>
            <person name="Wollam A."/>
            <person name="Yoakum M."/>
            <person name="Bell M."/>
            <person name="Dedhia N."/>
            <person name="Parnell L."/>
            <person name="Shah R."/>
            <person name="Rodriguez M."/>
            <person name="Hoon See L."/>
            <person name="Vil D."/>
            <person name="Baker J."/>
            <person name="Kirchoff K."/>
            <person name="Toth K."/>
            <person name="King L."/>
            <person name="Bahret A."/>
            <person name="Miller B."/>
            <person name="Marra M.A."/>
            <person name="Martienssen R."/>
            <person name="McCombie W.R."/>
            <person name="Wilson R.K."/>
            <person name="Murphy G."/>
            <person name="Bancroft I."/>
            <person name="Volckaert G."/>
            <person name="Wambutt R."/>
            <person name="Duesterhoeft A."/>
            <person name="Stiekema W."/>
            <person name="Pohl T."/>
            <person name="Entian K.-D."/>
            <person name="Terryn N."/>
            <person name="Hartley N."/>
            <person name="Bent E."/>
            <person name="Johnson S."/>
            <person name="Langham S.-A."/>
            <person name="McCullagh B."/>
            <person name="Robben J."/>
            <person name="Grymonprez B."/>
            <person name="Zimmermann W."/>
            <person name="Ramsperger U."/>
            <person name="Wedler H."/>
            <person name="Balke K."/>
            <person name="Wedler E."/>
            <person name="Peters S."/>
            <person name="van Staveren M."/>
            <person name="Dirkse W."/>
            <person name="Mooijman P."/>
            <person name="Klein Lankhorst R."/>
            <person name="Weitzenegger T."/>
            <person name="Bothe G."/>
            <person name="Rose M."/>
            <person name="Hauf J."/>
            <person name="Berneiser S."/>
            <person name="Hempel S."/>
            <person name="Feldpausch M."/>
            <person name="Lamberth S."/>
            <person name="Villarroel R."/>
            <person name="Gielen J."/>
            <person name="Ardiles W."/>
            <person name="Bents O."/>
            <person name="Lemcke K."/>
            <person name="Kolesov G."/>
            <person name="Mayer K.F.X."/>
            <person name="Rudd S."/>
            <person name="Schoof H."/>
            <person name="Schueller C."/>
            <person name="Zaccaria P."/>
            <person name="Mewes H.-W."/>
            <person name="Bevan M."/>
            <person name="Fransz P.F."/>
        </authorList>
    </citation>
    <scope>NUCLEOTIDE SEQUENCE [LARGE SCALE GENOMIC DNA]</scope>
    <source>
        <strain>cv. Columbia</strain>
    </source>
</reference>
<reference key="2">
    <citation type="journal article" date="2017" name="Plant J.">
        <title>Araport11: a complete reannotation of the Arabidopsis thaliana reference genome.</title>
        <authorList>
            <person name="Cheng C.Y."/>
            <person name="Krishnakumar V."/>
            <person name="Chan A.P."/>
            <person name="Thibaud-Nissen F."/>
            <person name="Schobel S."/>
            <person name="Town C.D."/>
        </authorList>
    </citation>
    <scope>GENOME REANNOTATION</scope>
    <source>
        <strain>cv. Columbia</strain>
    </source>
</reference>
<reference key="3">
    <citation type="journal article" date="2001" name="J. Biol. Chem.">
        <title>Phylogenetic analysis of the UDP-glycosyltransferase multigene family of Arabidopsis thaliana.</title>
        <authorList>
            <person name="Li Y."/>
            <person name="Baldauf S."/>
            <person name="Lim E.K."/>
            <person name="Bowles D.J."/>
        </authorList>
    </citation>
    <scope>GENE FAMILY</scope>
</reference>